<feature type="chain" id="PRO_1000025173" description="Glutamate--cysteine ligase">
    <location>
        <begin position="1"/>
        <end position="525"/>
    </location>
</feature>
<comment type="catalytic activity">
    <reaction evidence="1">
        <text>L-cysteine + L-glutamate + ATP = gamma-L-glutamyl-L-cysteine + ADP + phosphate + H(+)</text>
        <dbReference type="Rhea" id="RHEA:13285"/>
        <dbReference type="ChEBI" id="CHEBI:15378"/>
        <dbReference type="ChEBI" id="CHEBI:29985"/>
        <dbReference type="ChEBI" id="CHEBI:30616"/>
        <dbReference type="ChEBI" id="CHEBI:35235"/>
        <dbReference type="ChEBI" id="CHEBI:43474"/>
        <dbReference type="ChEBI" id="CHEBI:58173"/>
        <dbReference type="ChEBI" id="CHEBI:456216"/>
        <dbReference type="EC" id="6.3.2.2"/>
    </reaction>
</comment>
<comment type="pathway">
    <text evidence="1">Sulfur metabolism; glutathione biosynthesis; glutathione from L-cysteine and L-glutamate: step 1/2.</text>
</comment>
<comment type="similarity">
    <text evidence="1">Belongs to the glutamate--cysteine ligase type 1 family. Type 1 subfamily.</text>
</comment>
<organism>
    <name type="scientific">Hahella chejuensis (strain KCTC 2396)</name>
    <dbReference type="NCBI Taxonomy" id="349521"/>
    <lineage>
        <taxon>Bacteria</taxon>
        <taxon>Pseudomonadati</taxon>
        <taxon>Pseudomonadota</taxon>
        <taxon>Gammaproteobacteria</taxon>
        <taxon>Oceanospirillales</taxon>
        <taxon>Hahellaceae</taxon>
        <taxon>Hahella</taxon>
    </lineage>
</organism>
<accession>Q2S8F7</accession>
<name>GSH1_HAHCH</name>
<sequence length="525" mass="59532">MSEKLAARLEKLRRRHPQALADIYRGIEKEGLRVDSKGFIAQSDHPQALGSALTHPNITTDYSEALLELITPVTREVDELLTSLQEIHQFVHANLPAGESLWAGSMPSLLDGDESIRIAEYGESNLGKIKHVYRRGLAYRYGRIMQSIAGVHFNFSLGDDFWRAYQEVLAQSAPLQEFKSESYFSLIRNFRRWSWLLMYLFGASPALDRSFLNGRDHKLDQFGTDTLGLPHATSLRMSDLGYQNNAQSSLKICFNHLSTYVKTLYDATHTPFPRYEAIGLQRDGEYIQLNANLLQIENEYYNTIRPKRVTQSGEKPIQALKRRGIEYIEVRCLDLDPFSPIGVSESQIRFLDAFLLTCLLSDSAKIVDEECSIIEENFLTAVSRGRATDVELVRLLQNDYVQGGLQEWASRILEQVELCARELDAIKGGDSYAVAVRDARAKVNDPSLTPSARTYAAVSNGQSYVDWTLAMSQAHHQTLIANPLSPERMQHYVRAGEQSWADERALREADNLSFDAYLKQYLTYV</sequence>
<protein>
    <recommendedName>
        <fullName evidence="1">Glutamate--cysteine ligase</fullName>
        <ecNumber evidence="1">6.3.2.2</ecNumber>
    </recommendedName>
    <alternativeName>
        <fullName evidence="1">Gamma-ECS</fullName>
        <shortName evidence="1">GCS</shortName>
    </alternativeName>
    <alternativeName>
        <fullName evidence="1">Gamma-glutamylcysteine synthetase</fullName>
    </alternativeName>
</protein>
<gene>
    <name evidence="1" type="primary">gshA</name>
    <name type="ordered locus">HCH_06422</name>
</gene>
<proteinExistence type="inferred from homology"/>
<keyword id="KW-0067">ATP-binding</keyword>
<keyword id="KW-0317">Glutathione biosynthesis</keyword>
<keyword id="KW-0436">Ligase</keyword>
<keyword id="KW-0547">Nucleotide-binding</keyword>
<keyword id="KW-1185">Reference proteome</keyword>
<evidence type="ECO:0000255" key="1">
    <source>
        <dbReference type="HAMAP-Rule" id="MF_00578"/>
    </source>
</evidence>
<dbReference type="EC" id="6.3.2.2" evidence="1"/>
<dbReference type="EMBL" id="CP000155">
    <property type="protein sequence ID" value="ABC33067.1"/>
    <property type="molecule type" value="Genomic_DNA"/>
</dbReference>
<dbReference type="RefSeq" id="WP_011400119.1">
    <property type="nucleotide sequence ID" value="NC_007645.1"/>
</dbReference>
<dbReference type="SMR" id="Q2S8F7"/>
<dbReference type="STRING" id="349521.HCH_06422"/>
<dbReference type="KEGG" id="hch:HCH_06422"/>
<dbReference type="eggNOG" id="COG2918">
    <property type="taxonomic scope" value="Bacteria"/>
</dbReference>
<dbReference type="HOGENOM" id="CLU_020728_3_0_6"/>
<dbReference type="OrthoDB" id="9803907at2"/>
<dbReference type="UniPathway" id="UPA00142">
    <property type="reaction ID" value="UER00209"/>
</dbReference>
<dbReference type="Proteomes" id="UP000000238">
    <property type="component" value="Chromosome"/>
</dbReference>
<dbReference type="GO" id="GO:0005829">
    <property type="term" value="C:cytosol"/>
    <property type="evidence" value="ECO:0007669"/>
    <property type="project" value="TreeGrafter"/>
</dbReference>
<dbReference type="GO" id="GO:0005524">
    <property type="term" value="F:ATP binding"/>
    <property type="evidence" value="ECO:0007669"/>
    <property type="project" value="UniProtKB-KW"/>
</dbReference>
<dbReference type="GO" id="GO:0004357">
    <property type="term" value="F:glutamate-cysteine ligase activity"/>
    <property type="evidence" value="ECO:0007669"/>
    <property type="project" value="UniProtKB-UniRule"/>
</dbReference>
<dbReference type="GO" id="GO:0046872">
    <property type="term" value="F:metal ion binding"/>
    <property type="evidence" value="ECO:0007669"/>
    <property type="project" value="TreeGrafter"/>
</dbReference>
<dbReference type="GO" id="GO:0006750">
    <property type="term" value="P:glutathione biosynthetic process"/>
    <property type="evidence" value="ECO:0007669"/>
    <property type="project" value="UniProtKB-UniRule"/>
</dbReference>
<dbReference type="Gene3D" id="3.30.590.20">
    <property type="match status" value="1"/>
</dbReference>
<dbReference type="HAMAP" id="MF_00578">
    <property type="entry name" value="Glu_cys_ligase"/>
    <property type="match status" value="1"/>
</dbReference>
<dbReference type="InterPro" id="IPR014746">
    <property type="entry name" value="Gln_synth/guanido_kin_cat_dom"/>
</dbReference>
<dbReference type="InterPro" id="IPR007370">
    <property type="entry name" value="Glu_cys_ligase"/>
</dbReference>
<dbReference type="InterPro" id="IPR006334">
    <property type="entry name" value="Glut_cys_ligase"/>
</dbReference>
<dbReference type="NCBIfam" id="TIGR01434">
    <property type="entry name" value="glu_cys_ligase"/>
    <property type="match status" value="1"/>
</dbReference>
<dbReference type="PANTHER" id="PTHR38761">
    <property type="entry name" value="GLUTAMATE--CYSTEINE LIGASE"/>
    <property type="match status" value="1"/>
</dbReference>
<dbReference type="PANTHER" id="PTHR38761:SF1">
    <property type="entry name" value="GLUTAMATE--CYSTEINE LIGASE"/>
    <property type="match status" value="1"/>
</dbReference>
<dbReference type="Pfam" id="PF04262">
    <property type="entry name" value="Glu_cys_ligase"/>
    <property type="match status" value="1"/>
</dbReference>
<dbReference type="SUPFAM" id="SSF55931">
    <property type="entry name" value="Glutamine synthetase/guanido kinase"/>
    <property type="match status" value="1"/>
</dbReference>
<reference key="1">
    <citation type="journal article" date="2005" name="Nucleic Acids Res.">
        <title>Genomic blueprint of Hahella chejuensis, a marine microbe producing an algicidal agent.</title>
        <authorList>
            <person name="Jeong H."/>
            <person name="Yim J.H."/>
            <person name="Lee C."/>
            <person name="Choi S.-H."/>
            <person name="Park Y.K."/>
            <person name="Yoon S.H."/>
            <person name="Hur C.-G."/>
            <person name="Kang H.-Y."/>
            <person name="Kim D."/>
            <person name="Lee H.H."/>
            <person name="Park K.H."/>
            <person name="Park S.-H."/>
            <person name="Park H.-S."/>
            <person name="Lee H.K."/>
            <person name="Oh T.K."/>
            <person name="Kim J.F."/>
        </authorList>
    </citation>
    <scope>NUCLEOTIDE SEQUENCE [LARGE SCALE GENOMIC DNA]</scope>
    <source>
        <strain>KCTC 2396</strain>
    </source>
</reference>